<accession>B9KMJ2</accession>
<feature type="chain" id="PRO_1000197834" description="UPF0178 protein RSKD131_2223">
    <location>
        <begin position="1"/>
        <end position="162"/>
    </location>
</feature>
<evidence type="ECO:0000255" key="1">
    <source>
        <dbReference type="HAMAP-Rule" id="MF_00489"/>
    </source>
</evidence>
<name>Y2223_CERSK</name>
<protein>
    <recommendedName>
        <fullName evidence="1">UPF0178 protein RSKD131_2223</fullName>
    </recommendedName>
</protein>
<sequence length="162" mass="17083">MTDLYIDADACPVKAEAERVAVRHGVRMFLVSNGGIRPPAHPLVESIFVPEGPDVADMWIADRARTGDVVVTSDIPLAAKVVAAGALVVKPNGETLTQANIGNALATRDLMADLRSADPFRQGSGRPFSKADRSRFLDALERAMRKAQEAGRSASGGSEAGS</sequence>
<dbReference type="EMBL" id="CP001150">
    <property type="protein sequence ID" value="ACM02083.1"/>
    <property type="molecule type" value="Genomic_DNA"/>
</dbReference>
<dbReference type="RefSeq" id="WP_015921275.1">
    <property type="nucleotide sequence ID" value="NC_011963.1"/>
</dbReference>
<dbReference type="GeneID" id="67447607"/>
<dbReference type="KEGG" id="rsk:RSKD131_2223"/>
<dbReference type="HOGENOM" id="CLU_106619_2_1_5"/>
<dbReference type="HAMAP" id="MF_00489">
    <property type="entry name" value="UPF0178"/>
    <property type="match status" value="1"/>
</dbReference>
<dbReference type="InterPro" id="IPR003791">
    <property type="entry name" value="UPF0178"/>
</dbReference>
<dbReference type="NCBIfam" id="NF001095">
    <property type="entry name" value="PRK00124.1"/>
    <property type="match status" value="1"/>
</dbReference>
<dbReference type="PANTHER" id="PTHR35146">
    <property type="entry name" value="UPF0178 PROTEIN YAII"/>
    <property type="match status" value="1"/>
</dbReference>
<dbReference type="PANTHER" id="PTHR35146:SF1">
    <property type="entry name" value="UPF0178 PROTEIN YAII"/>
    <property type="match status" value="1"/>
</dbReference>
<dbReference type="Pfam" id="PF02639">
    <property type="entry name" value="DUF188"/>
    <property type="match status" value="1"/>
</dbReference>
<comment type="similarity">
    <text evidence="1">Belongs to the UPF0178 family.</text>
</comment>
<organism>
    <name type="scientific">Cereibacter sphaeroides (strain KD131 / KCTC 12085)</name>
    <name type="common">Rhodobacter sphaeroides</name>
    <dbReference type="NCBI Taxonomy" id="557760"/>
    <lineage>
        <taxon>Bacteria</taxon>
        <taxon>Pseudomonadati</taxon>
        <taxon>Pseudomonadota</taxon>
        <taxon>Alphaproteobacteria</taxon>
        <taxon>Rhodobacterales</taxon>
        <taxon>Paracoccaceae</taxon>
        <taxon>Cereibacter</taxon>
    </lineage>
</organism>
<gene>
    <name type="ordered locus">RSKD131_2223</name>
</gene>
<reference key="1">
    <citation type="journal article" date="2009" name="J. Bacteriol.">
        <title>Complete genome sequence of Rhodobacter sphaeroides KD131.</title>
        <authorList>
            <person name="Lim S.-K."/>
            <person name="Kim S.J."/>
            <person name="Cha S.H."/>
            <person name="Oh Y.-K."/>
            <person name="Rhee H.-J."/>
            <person name="Kim M.-S."/>
            <person name="Lee J.K."/>
        </authorList>
    </citation>
    <scope>NUCLEOTIDE SEQUENCE [LARGE SCALE GENOMIC DNA]</scope>
    <source>
        <strain>KD131 / KCTC 12085</strain>
    </source>
</reference>
<proteinExistence type="inferred from homology"/>